<comment type="function">
    <text evidence="1">NQR complex catalyzes the reduction of ubiquinone-1 to ubiquinol by two successive reactions, coupled with the transport of Na(+) ions from the cytoplasm to the periplasm. NqrA to NqrE are probably involved in the second step, the conversion of ubisemiquinone to ubiquinol.</text>
</comment>
<comment type="catalytic activity">
    <reaction evidence="1">
        <text>a ubiquinone + n Na(+)(in) + NADH + H(+) = a ubiquinol + n Na(+)(out) + NAD(+)</text>
        <dbReference type="Rhea" id="RHEA:47748"/>
        <dbReference type="Rhea" id="RHEA-COMP:9565"/>
        <dbReference type="Rhea" id="RHEA-COMP:9566"/>
        <dbReference type="ChEBI" id="CHEBI:15378"/>
        <dbReference type="ChEBI" id="CHEBI:16389"/>
        <dbReference type="ChEBI" id="CHEBI:17976"/>
        <dbReference type="ChEBI" id="CHEBI:29101"/>
        <dbReference type="ChEBI" id="CHEBI:57540"/>
        <dbReference type="ChEBI" id="CHEBI:57945"/>
        <dbReference type="EC" id="7.2.1.1"/>
    </reaction>
</comment>
<comment type="subunit">
    <text evidence="1">Composed of six subunits; NqrA, NqrB, NqrC, NqrD, NqrE and NqrF.</text>
</comment>
<comment type="subcellular location">
    <subcellularLocation>
        <location evidence="1">Cell inner membrane</location>
        <topology evidence="1">Multi-pass membrane protein</topology>
    </subcellularLocation>
</comment>
<comment type="similarity">
    <text evidence="1">Belongs to the NqrDE/RnfAE family.</text>
</comment>
<sequence>MEHYISLFVKAVFIENLALSFFLGMCTFLAVSKKVTTSIGLGVAVIVVLGISVPVNNLVYHAVLAPGSLTWLGYPDADLSFLRFLTFIGVIAALVQILEMALDKFFPALYNALGIFLPLITVNCAIFGAVSFMVERNYNFGESVVYGIGAGVGWALAITLLAGIREKMKYSDVPDGLRGLGITFITVGLMALGFMSFSGISL</sequence>
<reference key="1">
    <citation type="journal article" date="2005" name="Genome Res.">
        <title>Coping with cold: the genome of the versatile marine Antarctica bacterium Pseudoalteromonas haloplanktis TAC125.</title>
        <authorList>
            <person name="Medigue C."/>
            <person name="Krin E."/>
            <person name="Pascal G."/>
            <person name="Barbe V."/>
            <person name="Bernsel A."/>
            <person name="Bertin P.N."/>
            <person name="Cheung F."/>
            <person name="Cruveiller S."/>
            <person name="D'Amico S."/>
            <person name="Duilio A."/>
            <person name="Fang G."/>
            <person name="Feller G."/>
            <person name="Ho C."/>
            <person name="Mangenot S."/>
            <person name="Marino G."/>
            <person name="Nilsson J."/>
            <person name="Parrilli E."/>
            <person name="Rocha E.P.C."/>
            <person name="Rouy Z."/>
            <person name="Sekowska A."/>
            <person name="Tutino M.L."/>
            <person name="Vallenet D."/>
            <person name="von Heijne G."/>
            <person name="Danchin A."/>
        </authorList>
    </citation>
    <scope>NUCLEOTIDE SEQUENCE [LARGE SCALE GENOMIC DNA]</scope>
    <source>
        <strain>TAC 125</strain>
    </source>
</reference>
<dbReference type="EC" id="7.2.1.1" evidence="1"/>
<dbReference type="EMBL" id="CR954246">
    <property type="protein sequence ID" value="CAI87293.1"/>
    <property type="molecule type" value="Genomic_DNA"/>
</dbReference>
<dbReference type="SMR" id="Q3IHN9"/>
<dbReference type="STRING" id="326442.PSHAa2237"/>
<dbReference type="KEGG" id="pha:PSHAa2237"/>
<dbReference type="eggNOG" id="COG2209">
    <property type="taxonomic scope" value="Bacteria"/>
</dbReference>
<dbReference type="HOGENOM" id="CLU_095255_0_0_6"/>
<dbReference type="BioCyc" id="PHAL326442:PSHA_RS11035-MONOMER"/>
<dbReference type="Proteomes" id="UP000006843">
    <property type="component" value="Chromosome I"/>
</dbReference>
<dbReference type="GO" id="GO:0009276">
    <property type="term" value="C:Gram-negative-bacterium-type cell wall"/>
    <property type="evidence" value="ECO:0007669"/>
    <property type="project" value="InterPro"/>
</dbReference>
<dbReference type="GO" id="GO:0005886">
    <property type="term" value="C:plasma membrane"/>
    <property type="evidence" value="ECO:0007669"/>
    <property type="project" value="UniProtKB-SubCell"/>
</dbReference>
<dbReference type="GO" id="GO:0016655">
    <property type="term" value="F:oxidoreductase activity, acting on NAD(P)H, quinone or similar compound as acceptor"/>
    <property type="evidence" value="ECO:0007669"/>
    <property type="project" value="UniProtKB-UniRule"/>
</dbReference>
<dbReference type="GO" id="GO:0022904">
    <property type="term" value="P:respiratory electron transport chain"/>
    <property type="evidence" value="ECO:0007669"/>
    <property type="project" value="InterPro"/>
</dbReference>
<dbReference type="GO" id="GO:0006814">
    <property type="term" value="P:sodium ion transport"/>
    <property type="evidence" value="ECO:0007669"/>
    <property type="project" value="UniProtKB-UniRule"/>
</dbReference>
<dbReference type="HAMAP" id="MF_00429">
    <property type="entry name" value="NqrE"/>
    <property type="match status" value="1"/>
</dbReference>
<dbReference type="InterPro" id="IPR003667">
    <property type="entry name" value="NqrDE/RnfAE"/>
</dbReference>
<dbReference type="InterPro" id="IPR050133">
    <property type="entry name" value="NqrDE/RnfAE_oxidrdctase"/>
</dbReference>
<dbReference type="InterPro" id="IPR010967">
    <property type="entry name" value="NqrE"/>
</dbReference>
<dbReference type="NCBIfam" id="TIGR01940">
    <property type="entry name" value="nqrE"/>
    <property type="match status" value="1"/>
</dbReference>
<dbReference type="PANTHER" id="PTHR30335">
    <property type="entry name" value="INTEGRAL MEMBRANE PROTEIN OF SOXR-REDUCING COMPLEX"/>
    <property type="match status" value="1"/>
</dbReference>
<dbReference type="PANTHER" id="PTHR30335:SF1">
    <property type="entry name" value="NA(+)-TRANSLOCATING NADH-QUINONE REDUCTASE SUBUNIT E"/>
    <property type="match status" value="1"/>
</dbReference>
<dbReference type="Pfam" id="PF02508">
    <property type="entry name" value="Rnf-Nqr"/>
    <property type="match status" value="1"/>
</dbReference>
<dbReference type="PIRSF" id="PIRSF006102">
    <property type="entry name" value="NQR_DE"/>
    <property type="match status" value="1"/>
</dbReference>
<feature type="chain" id="PRO_1000060209" description="Na(+)-translocating NADH-quinone reductase subunit E">
    <location>
        <begin position="1"/>
        <end position="202"/>
    </location>
</feature>
<feature type="transmembrane region" description="Helical" evidence="1">
    <location>
        <begin position="11"/>
        <end position="31"/>
    </location>
</feature>
<feature type="transmembrane region" description="Helical" evidence="1">
    <location>
        <begin position="35"/>
        <end position="55"/>
    </location>
</feature>
<feature type="transmembrane region" description="Helical" evidence="1">
    <location>
        <begin position="81"/>
        <end position="101"/>
    </location>
</feature>
<feature type="transmembrane region" description="Helical" evidence="1">
    <location>
        <begin position="114"/>
        <end position="134"/>
    </location>
</feature>
<feature type="transmembrane region" description="Helical" evidence="1">
    <location>
        <begin position="144"/>
        <end position="164"/>
    </location>
</feature>
<feature type="transmembrane region" description="Helical" evidence="1">
    <location>
        <begin position="180"/>
        <end position="200"/>
    </location>
</feature>
<keyword id="KW-0997">Cell inner membrane</keyword>
<keyword id="KW-1003">Cell membrane</keyword>
<keyword id="KW-0406">Ion transport</keyword>
<keyword id="KW-0472">Membrane</keyword>
<keyword id="KW-0520">NAD</keyword>
<keyword id="KW-1185">Reference proteome</keyword>
<keyword id="KW-0915">Sodium</keyword>
<keyword id="KW-0739">Sodium transport</keyword>
<keyword id="KW-1278">Translocase</keyword>
<keyword id="KW-0812">Transmembrane</keyword>
<keyword id="KW-1133">Transmembrane helix</keyword>
<keyword id="KW-0813">Transport</keyword>
<keyword id="KW-0830">Ubiquinone</keyword>
<proteinExistence type="inferred from homology"/>
<gene>
    <name evidence="1" type="primary">nqrE</name>
    <name type="ordered locus">PSHAa2237</name>
</gene>
<accession>Q3IHN9</accession>
<evidence type="ECO:0000255" key="1">
    <source>
        <dbReference type="HAMAP-Rule" id="MF_00429"/>
    </source>
</evidence>
<name>NQRE_PSET1</name>
<organism>
    <name type="scientific">Pseudoalteromonas translucida (strain TAC 125)</name>
    <dbReference type="NCBI Taxonomy" id="326442"/>
    <lineage>
        <taxon>Bacteria</taxon>
        <taxon>Pseudomonadati</taxon>
        <taxon>Pseudomonadota</taxon>
        <taxon>Gammaproteobacteria</taxon>
        <taxon>Alteromonadales</taxon>
        <taxon>Pseudoalteromonadaceae</taxon>
        <taxon>Pseudoalteromonas</taxon>
    </lineage>
</organism>
<protein>
    <recommendedName>
        <fullName evidence="1">Na(+)-translocating NADH-quinone reductase subunit E</fullName>
        <shortName evidence="1">Na(+)-NQR subunit E</shortName>
        <shortName evidence="1">Na(+)-translocating NQR subunit E</shortName>
        <ecNumber evidence="1">7.2.1.1</ecNumber>
    </recommendedName>
    <alternativeName>
        <fullName evidence="1">NQR complex subunit E</fullName>
    </alternativeName>
    <alternativeName>
        <fullName evidence="1">NQR-1 subunit E</fullName>
    </alternativeName>
</protein>